<reference key="1">
    <citation type="online journal article" date="1997" name="Plant Gene Register">
        <title>Sequence of an allergen-, stress-, and pathogenesis-related protein from apricot fruit. Gene expression during fruit ripening.</title>
        <authorList>
            <person name="Mbeguie-A-Mbeguie D."/>
            <person name="Gomez R.-M."/>
            <person name="Fils-Lycaon B.R."/>
        </authorList>
        <locator>PGR97-180</locator>
    </citation>
    <scope>NUCLEOTIDE SEQUENCE [MRNA]</scope>
    <source>
        <strain>cv. Bergeron</strain>
        <tissue>Exocarp</tissue>
        <tissue>Mesocarp</tissue>
    </source>
</reference>
<feature type="chain" id="PRO_0000154201" description="Major allergen Pru ar 1">
    <location>
        <begin position="1"/>
        <end position="160"/>
    </location>
</feature>
<comment type="allergen">
    <text>Causes an allergic reaction in human.</text>
</comment>
<comment type="similarity">
    <text evidence="1">Belongs to the BetVI family.</text>
</comment>
<protein>
    <recommendedName>
        <fullName>Major allergen Pru ar 1</fullName>
    </recommendedName>
    <allergenName>Pru ar 1</allergenName>
</protein>
<evidence type="ECO:0000305" key="1"/>
<organism>
    <name type="scientific">Prunus armeniaca</name>
    <name type="common">Apricot</name>
    <name type="synonym">Armeniaca vulgaris</name>
    <dbReference type="NCBI Taxonomy" id="36596"/>
    <lineage>
        <taxon>Eukaryota</taxon>
        <taxon>Viridiplantae</taxon>
        <taxon>Streptophyta</taxon>
        <taxon>Embryophyta</taxon>
        <taxon>Tracheophyta</taxon>
        <taxon>Spermatophyta</taxon>
        <taxon>Magnoliopsida</taxon>
        <taxon>eudicotyledons</taxon>
        <taxon>Gunneridae</taxon>
        <taxon>Pentapetalae</taxon>
        <taxon>rosids</taxon>
        <taxon>fabids</taxon>
        <taxon>Rosales</taxon>
        <taxon>Rosaceae</taxon>
        <taxon>Amygdaloideae</taxon>
        <taxon>Amygdaleae</taxon>
        <taxon>Prunus</taxon>
    </lineage>
</organism>
<dbReference type="EMBL" id="U93165">
    <property type="protein sequence ID" value="AAB97141.1"/>
    <property type="molecule type" value="mRNA"/>
</dbReference>
<dbReference type="SMR" id="O50001"/>
<dbReference type="Allergome" id="3446">
    <property type="allergen name" value="Pru ar 1.0101"/>
</dbReference>
<dbReference type="Allergome" id="595">
    <property type="allergen name" value="Pru ar 1"/>
</dbReference>
<dbReference type="GO" id="GO:0005737">
    <property type="term" value="C:cytoplasm"/>
    <property type="evidence" value="ECO:0007669"/>
    <property type="project" value="TreeGrafter"/>
</dbReference>
<dbReference type="GO" id="GO:0005634">
    <property type="term" value="C:nucleus"/>
    <property type="evidence" value="ECO:0007669"/>
    <property type="project" value="TreeGrafter"/>
</dbReference>
<dbReference type="GO" id="GO:0010427">
    <property type="term" value="F:abscisic acid binding"/>
    <property type="evidence" value="ECO:0007669"/>
    <property type="project" value="InterPro"/>
</dbReference>
<dbReference type="GO" id="GO:0004864">
    <property type="term" value="F:protein phosphatase inhibitor activity"/>
    <property type="evidence" value="ECO:0007669"/>
    <property type="project" value="InterPro"/>
</dbReference>
<dbReference type="GO" id="GO:0038023">
    <property type="term" value="F:signaling receptor activity"/>
    <property type="evidence" value="ECO:0007669"/>
    <property type="project" value="InterPro"/>
</dbReference>
<dbReference type="GO" id="GO:0009738">
    <property type="term" value="P:abscisic acid-activated signaling pathway"/>
    <property type="evidence" value="ECO:0007669"/>
    <property type="project" value="InterPro"/>
</dbReference>
<dbReference type="GO" id="GO:0006952">
    <property type="term" value="P:defense response"/>
    <property type="evidence" value="ECO:0007669"/>
    <property type="project" value="UniProtKB-KW"/>
</dbReference>
<dbReference type="CDD" id="cd07816">
    <property type="entry name" value="Bet_v1-like"/>
    <property type="match status" value="1"/>
</dbReference>
<dbReference type="FunFam" id="3.30.530.20:FF:000007">
    <property type="entry name" value="Major pollen allergen Bet v 1-A"/>
    <property type="match status" value="1"/>
</dbReference>
<dbReference type="Gene3D" id="3.30.530.20">
    <property type="match status" value="1"/>
</dbReference>
<dbReference type="InterPro" id="IPR000916">
    <property type="entry name" value="Bet_v_I/MLP"/>
</dbReference>
<dbReference type="InterPro" id="IPR024949">
    <property type="entry name" value="Bet_v_I_allergen"/>
</dbReference>
<dbReference type="InterPro" id="IPR050279">
    <property type="entry name" value="Plant_def-hormone_signal"/>
</dbReference>
<dbReference type="InterPro" id="IPR023393">
    <property type="entry name" value="START-like_dom_sf"/>
</dbReference>
<dbReference type="PANTHER" id="PTHR31213">
    <property type="entry name" value="OS08G0374000 PROTEIN-RELATED"/>
    <property type="match status" value="1"/>
</dbReference>
<dbReference type="PANTHER" id="PTHR31213:SF55">
    <property type="entry name" value="STRESS-INDUCED PROTEIN SAM22"/>
    <property type="match status" value="1"/>
</dbReference>
<dbReference type="Pfam" id="PF00407">
    <property type="entry name" value="Bet_v_1"/>
    <property type="match status" value="1"/>
</dbReference>
<dbReference type="PRINTS" id="PR00634">
    <property type="entry name" value="BETALLERGEN"/>
</dbReference>
<dbReference type="SMART" id="SM01037">
    <property type="entry name" value="Bet_v_1"/>
    <property type="match status" value="1"/>
</dbReference>
<dbReference type="SUPFAM" id="SSF55961">
    <property type="entry name" value="Bet v1-like"/>
    <property type="match status" value="1"/>
</dbReference>
<dbReference type="PROSITE" id="PS00451">
    <property type="entry name" value="PATHOGENESIS_BETVI"/>
    <property type="match status" value="1"/>
</dbReference>
<name>PRU1_PRUAR</name>
<proteinExistence type="evidence at protein level"/>
<keyword id="KW-0020">Allergen</keyword>
<keyword id="KW-0568">Pathogenesis-related protein</keyword>
<keyword id="KW-0611">Plant defense</keyword>
<sequence length="160" mass="17352">MGVFTYETEFTSVIPPEKLFKAFILDADNLIPKVAPTAVKGTEILEGDGGVGTIKKVTFGEGSQYAYVKHRVDGIDKDNLSYSYTLIEGDALSDVIENIAYDIKLVASPDGGSIVKTTSHYHTKGDVEIKEEQVKAGKEKAAGLFKLVEAYLLANPDAYN</sequence>
<accession>O50001</accession>